<comment type="catalytic activity">
    <reaction evidence="1">
        <text>urea + 2 H2O + H(+) = hydrogencarbonate + 2 NH4(+)</text>
        <dbReference type="Rhea" id="RHEA:20557"/>
        <dbReference type="ChEBI" id="CHEBI:15377"/>
        <dbReference type="ChEBI" id="CHEBI:15378"/>
        <dbReference type="ChEBI" id="CHEBI:16199"/>
        <dbReference type="ChEBI" id="CHEBI:17544"/>
        <dbReference type="ChEBI" id="CHEBI:28938"/>
        <dbReference type="EC" id="3.5.1.5"/>
    </reaction>
</comment>
<comment type="cofactor">
    <cofactor evidence="1">
        <name>Ni cation</name>
        <dbReference type="ChEBI" id="CHEBI:25516"/>
    </cofactor>
    <text evidence="1">Binds 2 nickel ions per subunit.</text>
</comment>
<comment type="pathway">
    <text evidence="1">Nitrogen metabolism; urea degradation; CO(2) and NH(3) from urea (urease route): step 1/1.</text>
</comment>
<comment type="subunit">
    <text evidence="1">Heterotrimer of UreA (gamma), UreB (beta) and UreC (alpha) subunits. Three heterotrimers associate to form the active enzyme.</text>
</comment>
<comment type="subcellular location">
    <subcellularLocation>
        <location evidence="1">Cytoplasm</location>
    </subcellularLocation>
</comment>
<comment type="PTM">
    <text evidence="1">Carboxylation allows a single lysine to coordinate two nickel ions.</text>
</comment>
<comment type="similarity">
    <text evidence="1">Belongs to the metallo-dependent hydrolases superfamily. Urease alpha subunit family.</text>
</comment>
<protein>
    <recommendedName>
        <fullName evidence="1">Urease subunit alpha</fullName>
        <ecNumber evidence="1">3.5.1.5</ecNumber>
    </recommendedName>
    <alternativeName>
        <fullName evidence="1">Urea amidohydrolase subunit alpha</fullName>
    </alternativeName>
</protein>
<gene>
    <name evidence="1" type="primary">ureC</name>
    <name type="ordered locus">SAOUHSC_02561</name>
</gene>
<keyword id="KW-0963">Cytoplasm</keyword>
<keyword id="KW-0378">Hydrolase</keyword>
<keyword id="KW-0479">Metal-binding</keyword>
<keyword id="KW-0533">Nickel</keyword>
<keyword id="KW-1185">Reference proteome</keyword>
<accession>Q2G2K5</accession>
<evidence type="ECO:0000255" key="1">
    <source>
        <dbReference type="HAMAP-Rule" id="MF_01953"/>
    </source>
</evidence>
<dbReference type="EC" id="3.5.1.5" evidence="1"/>
<dbReference type="EMBL" id="CP000253">
    <property type="protein sequence ID" value="ABD31573.1"/>
    <property type="molecule type" value="Genomic_DNA"/>
</dbReference>
<dbReference type="RefSeq" id="WP_000008673.1">
    <property type="nucleotide sequence ID" value="NZ_LS483365.1"/>
</dbReference>
<dbReference type="RefSeq" id="YP_501022.1">
    <property type="nucleotide sequence ID" value="NC_007795.1"/>
</dbReference>
<dbReference type="SMR" id="Q2G2K5"/>
<dbReference type="STRING" id="93061.SAOUHSC_02561"/>
<dbReference type="MEROPS" id="M38.982"/>
<dbReference type="PaxDb" id="1280-SAXN108_2538"/>
<dbReference type="GeneID" id="3921558"/>
<dbReference type="KEGG" id="sao:SAOUHSC_02561"/>
<dbReference type="PATRIC" id="fig|93061.5.peg.2310"/>
<dbReference type="eggNOG" id="COG0804">
    <property type="taxonomic scope" value="Bacteria"/>
</dbReference>
<dbReference type="HOGENOM" id="CLU_000980_0_0_9"/>
<dbReference type="OrthoDB" id="9802793at2"/>
<dbReference type="UniPathway" id="UPA00258">
    <property type="reaction ID" value="UER00370"/>
</dbReference>
<dbReference type="PRO" id="PR:Q2G2K5"/>
<dbReference type="Proteomes" id="UP000008816">
    <property type="component" value="Chromosome"/>
</dbReference>
<dbReference type="GO" id="GO:0005737">
    <property type="term" value="C:cytoplasm"/>
    <property type="evidence" value="ECO:0007669"/>
    <property type="project" value="UniProtKB-SubCell"/>
</dbReference>
<dbReference type="GO" id="GO:0016151">
    <property type="term" value="F:nickel cation binding"/>
    <property type="evidence" value="ECO:0007669"/>
    <property type="project" value="UniProtKB-UniRule"/>
</dbReference>
<dbReference type="GO" id="GO:0009039">
    <property type="term" value="F:urease activity"/>
    <property type="evidence" value="ECO:0007669"/>
    <property type="project" value="UniProtKB-UniRule"/>
</dbReference>
<dbReference type="GO" id="GO:0043419">
    <property type="term" value="P:urea catabolic process"/>
    <property type="evidence" value="ECO:0007669"/>
    <property type="project" value="UniProtKB-UniRule"/>
</dbReference>
<dbReference type="CDD" id="cd00375">
    <property type="entry name" value="Urease_alpha"/>
    <property type="match status" value="1"/>
</dbReference>
<dbReference type="Gene3D" id="3.20.20.140">
    <property type="entry name" value="Metal-dependent hydrolases"/>
    <property type="match status" value="1"/>
</dbReference>
<dbReference type="Gene3D" id="2.30.40.10">
    <property type="entry name" value="Urease, subunit C, domain 1"/>
    <property type="match status" value="1"/>
</dbReference>
<dbReference type="HAMAP" id="MF_01953">
    <property type="entry name" value="Urease_alpha"/>
    <property type="match status" value="1"/>
</dbReference>
<dbReference type="InterPro" id="IPR006680">
    <property type="entry name" value="Amidohydro-rel"/>
</dbReference>
<dbReference type="InterPro" id="IPR011059">
    <property type="entry name" value="Metal-dep_hydrolase_composite"/>
</dbReference>
<dbReference type="InterPro" id="IPR032466">
    <property type="entry name" value="Metal_Hydrolase"/>
</dbReference>
<dbReference type="InterPro" id="IPR011612">
    <property type="entry name" value="Urease_alpha_N_dom"/>
</dbReference>
<dbReference type="InterPro" id="IPR050112">
    <property type="entry name" value="Urease_alpha_subunit"/>
</dbReference>
<dbReference type="InterPro" id="IPR017950">
    <property type="entry name" value="Urease_AS"/>
</dbReference>
<dbReference type="InterPro" id="IPR005848">
    <property type="entry name" value="Urease_asu"/>
</dbReference>
<dbReference type="InterPro" id="IPR017951">
    <property type="entry name" value="Urease_asu_c"/>
</dbReference>
<dbReference type="InterPro" id="IPR029754">
    <property type="entry name" value="Urease_Ni-bd"/>
</dbReference>
<dbReference type="NCBIfam" id="NF009686">
    <property type="entry name" value="PRK13207.1"/>
    <property type="match status" value="1"/>
</dbReference>
<dbReference type="NCBIfam" id="TIGR01792">
    <property type="entry name" value="urease_alph"/>
    <property type="match status" value="1"/>
</dbReference>
<dbReference type="PANTHER" id="PTHR43440">
    <property type="entry name" value="UREASE"/>
    <property type="match status" value="1"/>
</dbReference>
<dbReference type="PANTHER" id="PTHR43440:SF1">
    <property type="entry name" value="UREASE"/>
    <property type="match status" value="1"/>
</dbReference>
<dbReference type="Pfam" id="PF01979">
    <property type="entry name" value="Amidohydro_1"/>
    <property type="match status" value="1"/>
</dbReference>
<dbReference type="Pfam" id="PF00449">
    <property type="entry name" value="Urease_alpha"/>
    <property type="match status" value="1"/>
</dbReference>
<dbReference type="PRINTS" id="PR01752">
    <property type="entry name" value="UREASE"/>
</dbReference>
<dbReference type="SUPFAM" id="SSF51338">
    <property type="entry name" value="Composite domain of metallo-dependent hydrolases"/>
    <property type="match status" value="1"/>
</dbReference>
<dbReference type="SUPFAM" id="SSF51556">
    <property type="entry name" value="Metallo-dependent hydrolases"/>
    <property type="match status" value="1"/>
</dbReference>
<dbReference type="PROSITE" id="PS01120">
    <property type="entry name" value="UREASE_1"/>
    <property type="match status" value="1"/>
</dbReference>
<dbReference type="PROSITE" id="PS00145">
    <property type="entry name" value="UREASE_2"/>
    <property type="match status" value="1"/>
</dbReference>
<dbReference type="PROSITE" id="PS51368">
    <property type="entry name" value="UREASE_3"/>
    <property type="match status" value="1"/>
</dbReference>
<name>URE1_STAA8</name>
<sequence length="571" mass="61780">MSFKMTQNQYTSLYGPTVGDSIRLGDTNLFAQIEKDYAVYGEEATFGGGKSIRDGMAQNPRVTRDDVNVADLVISNAVIIDYDKVVKADIGIKNGYIFAIGNAGNPDIMDNVDIIIGSTTDIIAAEGKIVTAGGIDTHVHFINPEQAEVALESGITTHIGGGTGASEGSKATTVTPGPWHIHRMLEAAEGLPINVGFTGKGQATNPTALIEQINAGAIGLKVHEDWGATPSALSHALDVADEFDVQIALHADTLNEAGFMEDTMAAVKDRVLHMYHTEGAGGGHAPDLIKSAAFSNILPSSTNPTLPYTHNTVDEHLDMVMITHHLNAAIPEDIAFADSRIRKETIAAEDVLQDMGVFSMISSDSQAMGRVGEVITRTWQVAHRMKEQRGPLDGDFEHNDNNRIKRYIAKYTINPAITHGISEYVGSIEPGKLADIVLWDPIFFGVKPELVVKGGLINSAVNGDANGSIPTSEPMKYRKMYGQYGGNLTSTSMTFVSKTAYENGINRALNLKRMVRPVKNIRQLSKADMKNNSATPKLDVDPQTYEVYVDGEKITSNAATELPLTQRYFLF</sequence>
<proteinExistence type="inferred from homology"/>
<reference key="1">
    <citation type="book" date="2006" name="Gram positive pathogens, 2nd edition">
        <title>The Staphylococcus aureus NCTC 8325 genome.</title>
        <editorList>
            <person name="Fischetti V."/>
            <person name="Novick R."/>
            <person name="Ferretti J."/>
            <person name="Portnoy D."/>
            <person name="Rood J."/>
        </editorList>
        <authorList>
            <person name="Gillaspy A.F."/>
            <person name="Worrell V."/>
            <person name="Orvis J."/>
            <person name="Roe B.A."/>
            <person name="Dyer D.W."/>
            <person name="Iandolo J.J."/>
        </authorList>
    </citation>
    <scope>NUCLEOTIDE SEQUENCE [LARGE SCALE GENOMIC DNA]</scope>
    <source>
        <strain>NCTC 8325 / PS 47</strain>
    </source>
</reference>
<feature type="chain" id="PRO_1000070698" description="Urease subunit alpha">
    <location>
        <begin position="1"/>
        <end position="571"/>
    </location>
</feature>
<feature type="domain" description="Urease" evidence="1">
    <location>
        <begin position="133"/>
        <end position="571"/>
    </location>
</feature>
<feature type="active site" description="Proton donor" evidence="1">
    <location>
        <position position="324"/>
    </location>
</feature>
<feature type="binding site" evidence="1">
    <location>
        <position position="138"/>
    </location>
    <ligand>
        <name>Ni(2+)</name>
        <dbReference type="ChEBI" id="CHEBI:49786"/>
        <label>1</label>
    </ligand>
</feature>
<feature type="binding site" evidence="1">
    <location>
        <position position="140"/>
    </location>
    <ligand>
        <name>Ni(2+)</name>
        <dbReference type="ChEBI" id="CHEBI:49786"/>
        <label>1</label>
    </ligand>
</feature>
<feature type="binding site" description="via carbamate group" evidence="1">
    <location>
        <position position="221"/>
    </location>
    <ligand>
        <name>Ni(2+)</name>
        <dbReference type="ChEBI" id="CHEBI:49786"/>
        <label>1</label>
    </ligand>
</feature>
<feature type="binding site" description="via carbamate group" evidence="1">
    <location>
        <position position="221"/>
    </location>
    <ligand>
        <name>Ni(2+)</name>
        <dbReference type="ChEBI" id="CHEBI:49786"/>
        <label>2</label>
    </ligand>
</feature>
<feature type="binding site" evidence="1">
    <location>
        <position position="223"/>
    </location>
    <ligand>
        <name>substrate</name>
    </ligand>
</feature>
<feature type="binding site" evidence="1">
    <location>
        <position position="250"/>
    </location>
    <ligand>
        <name>Ni(2+)</name>
        <dbReference type="ChEBI" id="CHEBI:49786"/>
        <label>2</label>
    </ligand>
</feature>
<feature type="binding site" evidence="1">
    <location>
        <position position="276"/>
    </location>
    <ligand>
        <name>Ni(2+)</name>
        <dbReference type="ChEBI" id="CHEBI:49786"/>
        <label>2</label>
    </ligand>
</feature>
<feature type="binding site" evidence="1">
    <location>
        <position position="364"/>
    </location>
    <ligand>
        <name>Ni(2+)</name>
        <dbReference type="ChEBI" id="CHEBI:49786"/>
        <label>1</label>
    </ligand>
</feature>
<feature type="modified residue" description="N6-carboxylysine" evidence="1">
    <location>
        <position position="221"/>
    </location>
</feature>
<organism>
    <name type="scientific">Staphylococcus aureus (strain NCTC 8325 / PS 47)</name>
    <dbReference type="NCBI Taxonomy" id="93061"/>
    <lineage>
        <taxon>Bacteria</taxon>
        <taxon>Bacillati</taxon>
        <taxon>Bacillota</taxon>
        <taxon>Bacilli</taxon>
        <taxon>Bacillales</taxon>
        <taxon>Staphylococcaceae</taxon>
        <taxon>Staphylococcus</taxon>
    </lineage>
</organism>